<geneLocation type="plasmid">
    <name>pAO1</name>
</geneLocation>
<name>NBOR_PAENI</name>
<feature type="chain" id="PRO_0000424088" description="Nicotine blue oxidoreductase">
    <location>
        <begin position="1"/>
        <end position="204"/>
    </location>
</feature>
<comment type="function">
    <text evidence="1">Catalyzes the reduction of nicotine blue to its hydroquinone form. Nicotine blue is the name given to the compound formed by the autocatalytic condensation of two molecules of 2,3,6-trihydroxypyridine, an intermediate in the nicotine degradation pathway. May play a role in preventing the intracellular formation of nicotine blue semiquinone radicals, which by redox cycling would lead to the formation of toxic reactive oxygen species. Besides nicotine blue, several other quinones are reduced by nboR.</text>
</comment>
<comment type="catalytic activity">
    <reaction evidence="1">
        <text>3,3'-bipyridine-2,2',5,5',6,6'-hexol + NADP(+) = (E)-2,2',5,5'-tetrahydroxy-6H,6'H-(3,3'-bipyridinylidene)-6,6'-dione + NADPH + 3 H(+)</text>
        <dbReference type="Rhea" id="RHEA:34027"/>
        <dbReference type="ChEBI" id="CHEBI:15378"/>
        <dbReference type="ChEBI" id="CHEBI:57783"/>
        <dbReference type="ChEBI" id="CHEBI:58349"/>
        <dbReference type="ChEBI" id="CHEBI:64998"/>
        <dbReference type="ChEBI" id="CHEBI:64999"/>
        <dbReference type="EC" id="1.1.1.328"/>
    </reaction>
</comment>
<comment type="catalytic activity">
    <reaction evidence="1">
        <text>3,3'-bipyridine-2,2',5,5',6,6'-hexol + NAD(+) = (E)-2,2',5,5'-tetrahydroxy-6H,6'H-(3,3'-bipyridinylidene)-6,6'-dione + NADH + 3 H(+)</text>
        <dbReference type="Rhea" id="RHEA:34023"/>
        <dbReference type="ChEBI" id="CHEBI:15378"/>
        <dbReference type="ChEBI" id="CHEBI:57540"/>
        <dbReference type="ChEBI" id="CHEBI:57945"/>
        <dbReference type="ChEBI" id="CHEBI:64998"/>
        <dbReference type="ChEBI" id="CHEBI:64999"/>
        <dbReference type="EC" id="1.1.1.328"/>
    </reaction>
</comment>
<comment type="cofactor">
    <cofactor evidence="1">
        <name>FMN</name>
        <dbReference type="ChEBI" id="CHEBI:58210"/>
    </cofactor>
</comment>
<comment type="biophysicochemical properties">
    <kinetics>
        <KM evidence="1">6.25 uM for 1,4-naphthoquinone</KM>
        <KM evidence="1">8.83 uM for 1,4-benzoquinone</KM>
        <KM evidence="1">23 uM for 2,6-dichlorophenolindophenol</KM>
    </kinetics>
</comment>
<comment type="pathway">
    <text>Alkaloid degradation; nicotine degradation.</text>
</comment>
<comment type="subunit">
    <text evidence="1">Homotetramer.</text>
</comment>
<sequence length="204" mass="21537">MGDTDLPCVTGVLLAAGAGKRLGRGPKALLPYRGRTLVEDAAETMLVGGCHEVVIVLGANAQAVCARANLEPYRIVVNHDWSSGMGSSYLAGDAAAHTKNHILVALVDQPGLSVTTVGRLLVSHRPGRISSAAYSSLDSPRVLRRGHPMVIDAGLRPAVASTVSGDAGARVFLRQKPWLVDLIDCSDESTGEDVDTVEQMYRLL</sequence>
<protein>
    <recommendedName>
        <fullName>Nicotine blue oxidoreductase</fullName>
        <ecNumber>1.1.1.328</ecNumber>
    </recommendedName>
</protein>
<reference key="1">
    <citation type="journal article" date="2001" name="J. Bacteriol.">
        <title>Gene cluster on pAO1 of Arthrobacter nicotinovorans involved in degradation of the plant alkaloid nicotine: cloning, purification, and characterization of 2,6-dihydroxypyridine 3-hydroxylase.</title>
        <authorList>
            <person name="Baitsch D."/>
            <person name="Sandu C."/>
            <person name="Brandsch R."/>
            <person name="Igloi G.L."/>
        </authorList>
    </citation>
    <scope>NUCLEOTIDE SEQUENCE [GENOMIC DNA]</scope>
</reference>
<reference key="2">
    <citation type="journal article" date="2003" name="J. Bacteriol.">
        <title>Sequence of the 165-kilobase catabolic plasmid pAO1 from Arthrobacter nicotinovorans and identification of a pAO1-dependent nicotine uptake system.</title>
        <authorList>
            <person name="Igloi G.L."/>
            <person name="Brandsch R."/>
        </authorList>
    </citation>
    <scope>NUCLEOTIDE SEQUENCE [GENOMIC DNA]</scope>
</reference>
<reference key="3">
    <citation type="journal article" date="2007" name="Appl. Environ. Microbiol.">
        <title>An NAD(P)H-nicotine blue oxidoreductase is part of the nicotine regulon and may protect Arthrobacter nicotinovorans from oxidative stress during nicotine catabolism.</title>
        <authorList>
            <person name="Mihasan M."/>
            <person name="Chiribau C.B."/>
            <person name="Friedrich T."/>
            <person name="Artenie V."/>
            <person name="Brandsch R."/>
        </authorList>
    </citation>
    <scope>FUNCTION</scope>
    <scope>CATALYTIC ACTIVITY</scope>
    <scope>COFACTOR</scope>
    <scope>BIOPHYSICOCHEMICAL PROPERTIES</scope>
    <scope>SUBUNIT</scope>
</reference>
<gene>
    <name type="primary">nboR</name>
</gene>
<keyword id="KW-0017">Alkaloid metabolism</keyword>
<keyword id="KW-0521">NADP</keyword>
<keyword id="KW-0560">Oxidoreductase</keyword>
<keyword id="KW-0614">Plasmid</keyword>
<accession>Q93NF6</accession>
<proteinExistence type="evidence at protein level"/>
<organism>
    <name type="scientific">Paenarthrobacter nicotinovorans</name>
    <name type="common">Arthrobacter nicotinovorans</name>
    <dbReference type="NCBI Taxonomy" id="29320"/>
    <lineage>
        <taxon>Bacteria</taxon>
        <taxon>Bacillati</taxon>
        <taxon>Actinomycetota</taxon>
        <taxon>Actinomycetes</taxon>
        <taxon>Micrococcales</taxon>
        <taxon>Micrococcaceae</taxon>
        <taxon>Paenarthrobacter</taxon>
    </lineage>
</organism>
<dbReference type="EC" id="1.1.1.328"/>
<dbReference type="EMBL" id="AF373840">
    <property type="protein sequence ID" value="AAK64261.1"/>
    <property type="molecule type" value="Genomic_DNA"/>
</dbReference>
<dbReference type="EMBL" id="AJ507836">
    <property type="protein sequence ID" value="CAD47930.1"/>
    <property type="molecule type" value="Genomic_DNA"/>
</dbReference>
<dbReference type="RefSeq" id="WP_016359441.1">
    <property type="nucleotide sequence ID" value="NC_021229.1"/>
</dbReference>
<dbReference type="RefSeq" id="YP_007988756.1">
    <property type="nucleotide sequence ID" value="NC_021229.1"/>
</dbReference>
<dbReference type="SMR" id="Q93NF6"/>
<dbReference type="GeneID" id="84020275"/>
<dbReference type="KEGG" id="ag:CAD47930"/>
<dbReference type="SABIO-RK" id="Q93NF6"/>
<dbReference type="UniPathway" id="UPA00106"/>
<dbReference type="GO" id="GO:0016779">
    <property type="term" value="F:nucleotidyltransferase activity"/>
    <property type="evidence" value="ECO:0007669"/>
    <property type="project" value="UniProtKB-ARBA"/>
</dbReference>
<dbReference type="GO" id="GO:0016491">
    <property type="term" value="F:oxidoreductase activity"/>
    <property type="evidence" value="ECO:0007669"/>
    <property type="project" value="UniProtKB-KW"/>
</dbReference>
<dbReference type="GO" id="GO:0009820">
    <property type="term" value="P:alkaloid metabolic process"/>
    <property type="evidence" value="ECO:0007669"/>
    <property type="project" value="UniProtKB-KW"/>
</dbReference>
<dbReference type="GO" id="GO:0019608">
    <property type="term" value="P:nicotine catabolic process"/>
    <property type="evidence" value="ECO:0007669"/>
    <property type="project" value="UniProtKB-UniPathway"/>
</dbReference>
<dbReference type="CDD" id="cd04182">
    <property type="entry name" value="GT_2_like_f"/>
    <property type="match status" value="1"/>
</dbReference>
<dbReference type="Gene3D" id="3.90.550.10">
    <property type="entry name" value="Spore Coat Polysaccharide Biosynthesis Protein SpsA, Chain A"/>
    <property type="match status" value="1"/>
</dbReference>
<dbReference type="InterPro" id="IPR025877">
    <property type="entry name" value="MobA-like_NTP_Trfase"/>
</dbReference>
<dbReference type="InterPro" id="IPR054799">
    <property type="entry name" value="NboR"/>
</dbReference>
<dbReference type="InterPro" id="IPR029044">
    <property type="entry name" value="Nucleotide-diphossugar_trans"/>
</dbReference>
<dbReference type="NCBIfam" id="NF045782">
    <property type="entry name" value="NicBOxredNboR"/>
    <property type="match status" value="1"/>
</dbReference>
<dbReference type="PANTHER" id="PTHR43777">
    <property type="entry name" value="MOLYBDENUM COFACTOR CYTIDYLYLTRANSFERASE"/>
    <property type="match status" value="1"/>
</dbReference>
<dbReference type="PANTHER" id="PTHR43777:SF1">
    <property type="entry name" value="MOLYBDENUM COFACTOR CYTIDYLYLTRANSFERASE"/>
    <property type="match status" value="1"/>
</dbReference>
<dbReference type="Pfam" id="PF12804">
    <property type="entry name" value="NTP_transf_3"/>
    <property type="match status" value="1"/>
</dbReference>
<dbReference type="SUPFAM" id="SSF53448">
    <property type="entry name" value="Nucleotide-diphospho-sugar transferases"/>
    <property type="match status" value="1"/>
</dbReference>
<evidence type="ECO:0000269" key="1">
    <source>
    </source>
</evidence>